<sequence>MFEKVNRSGLIIYLYYNRDAKKLQDYGDITYHSKKHRYLQLYVPTQEVEQLVGRLSKEKFIKKVRVCHIQELETPFVGNLYR</sequence>
<comment type="subcellular location">
    <subcellularLocation>
        <location evidence="1">Cytoplasm</location>
    </subcellularLocation>
</comment>
<comment type="similarity">
    <text evidence="1">Belongs to the UPF0298 family.</text>
</comment>
<proteinExistence type="inferred from homology"/>
<dbReference type="EMBL" id="CP000936">
    <property type="protein sequence ID" value="ACA37150.1"/>
    <property type="molecule type" value="Genomic_DNA"/>
</dbReference>
<dbReference type="RefSeq" id="WP_000462126.1">
    <property type="nucleotide sequence ID" value="NC_010380.1"/>
</dbReference>
<dbReference type="SMR" id="B1IAS5"/>
<dbReference type="KEGG" id="spv:SPH_0849"/>
<dbReference type="HOGENOM" id="CLU_159890_1_0_9"/>
<dbReference type="Proteomes" id="UP000002163">
    <property type="component" value="Chromosome"/>
</dbReference>
<dbReference type="GO" id="GO:0005737">
    <property type="term" value="C:cytoplasm"/>
    <property type="evidence" value="ECO:0007669"/>
    <property type="project" value="UniProtKB-SubCell"/>
</dbReference>
<dbReference type="HAMAP" id="MF_01126">
    <property type="entry name" value="UPF0298"/>
    <property type="match status" value="1"/>
</dbReference>
<dbReference type="InterPro" id="IPR016979">
    <property type="entry name" value="DUF2129"/>
</dbReference>
<dbReference type="NCBIfam" id="NF002631">
    <property type="entry name" value="PRK02302.1"/>
    <property type="match status" value="1"/>
</dbReference>
<dbReference type="Pfam" id="PF09902">
    <property type="entry name" value="DUF2129"/>
    <property type="match status" value="1"/>
</dbReference>
<dbReference type="PIRSF" id="PIRSF031653">
    <property type="entry name" value="UCP031653"/>
    <property type="match status" value="1"/>
</dbReference>
<accession>B1IAS5</accession>
<name>Y849_STRPI</name>
<reference key="1">
    <citation type="journal article" date="2010" name="Genome Biol.">
        <title>Structure and dynamics of the pan-genome of Streptococcus pneumoniae and closely related species.</title>
        <authorList>
            <person name="Donati C."/>
            <person name="Hiller N.L."/>
            <person name="Tettelin H."/>
            <person name="Muzzi A."/>
            <person name="Croucher N.J."/>
            <person name="Angiuoli S.V."/>
            <person name="Oggioni M."/>
            <person name="Dunning Hotopp J.C."/>
            <person name="Hu F.Z."/>
            <person name="Riley D.R."/>
            <person name="Covacci A."/>
            <person name="Mitchell T.J."/>
            <person name="Bentley S.D."/>
            <person name="Kilian M."/>
            <person name="Ehrlich G.D."/>
            <person name="Rappuoli R."/>
            <person name="Moxon E.R."/>
            <person name="Masignani V."/>
        </authorList>
    </citation>
    <scope>NUCLEOTIDE SEQUENCE [LARGE SCALE GENOMIC DNA]</scope>
    <source>
        <strain>Hungary19A-6</strain>
    </source>
</reference>
<feature type="chain" id="PRO_1000137290" description="UPF0298 protein SPH_0849">
    <location>
        <begin position="1"/>
        <end position="82"/>
    </location>
</feature>
<keyword id="KW-0963">Cytoplasm</keyword>
<evidence type="ECO:0000255" key="1">
    <source>
        <dbReference type="HAMAP-Rule" id="MF_01126"/>
    </source>
</evidence>
<protein>
    <recommendedName>
        <fullName evidence="1">UPF0298 protein SPH_0849</fullName>
    </recommendedName>
</protein>
<gene>
    <name type="ordered locus">SPH_0849</name>
</gene>
<organism>
    <name type="scientific">Streptococcus pneumoniae (strain Hungary19A-6)</name>
    <dbReference type="NCBI Taxonomy" id="487214"/>
    <lineage>
        <taxon>Bacteria</taxon>
        <taxon>Bacillati</taxon>
        <taxon>Bacillota</taxon>
        <taxon>Bacilli</taxon>
        <taxon>Lactobacillales</taxon>
        <taxon>Streptococcaceae</taxon>
        <taxon>Streptococcus</taxon>
    </lineage>
</organism>